<accession>Q44258</accession>
<gene>
    <name type="primary">cbaC</name>
</gene>
<organism>
    <name type="scientific">Comamonas testosteroni</name>
    <name type="common">Pseudomonas testosteroni</name>
    <dbReference type="NCBI Taxonomy" id="285"/>
    <lineage>
        <taxon>Bacteria</taxon>
        <taxon>Pseudomonadati</taxon>
        <taxon>Pseudomonadota</taxon>
        <taxon>Betaproteobacteria</taxon>
        <taxon>Burkholderiales</taxon>
        <taxon>Comamonadaceae</taxon>
        <taxon>Comamonas</taxon>
    </lineage>
</organism>
<keyword id="KW-0058">Aromatic hydrocarbons catabolism</keyword>
<keyword id="KW-0560">Oxidoreductase</keyword>
<comment type="similarity">
    <text evidence="1">To P.putida PHT4.</text>
</comment>
<sequence length="397" mass="44090">MRIGVVGLGKAFMLMLPTFLMDRRVQLVAASDTDPLSLRQFKADFPAAAVHGDIESLCKNPDVEVVYIGTPHQFHAVHAEIALNAGKHVLVEKPMAVTLEDCCRMNACAQRAGKYLIVGHSHSFDHPISRAKELIDSGRYGRVRFIHSMNYTDFLYRPRRAEELNTDLGGGVVFNQASHQLDVIRLLAQGRVVDVSSYLGRWDAARRTEGAYSALIKFDNGVAANVTYSGYAHYNSDEVMGWVNELGEKQPERRLFPTRLRLDEVLNKGSEAAYKNEMSYGRGWSAHGLPKMARNHQHFGHLVISCEGADIVPKAEKIEVFANGEYHCENFSMPDFPRQEVMDELFDAISGTRPPVHTGEWAMETLDLCIALLEGGKPELIGMRATAVACAGRSSGR</sequence>
<protein>
    <recommendedName>
        <fullName>1-carboxy-3-chloro-3,4-dihydroxycyclo hexa-1,5-diene dehydrogenase</fullName>
        <ecNumber>1.-.-.-</ecNumber>
    </recommendedName>
</protein>
<reference key="1">
    <citation type="journal article" date="1997" name="Gene">
        <title>The cis-diol dehydrogenase cbaC gene of Tn5271 is required for growth on 3-chlorobenzoate but not 3,4-dichlorobenzoate.</title>
        <authorList>
            <person name="Nakatsu C.H."/>
            <person name="Providenti M."/>
            <person name="Wyndham R.C."/>
        </authorList>
    </citation>
    <scope>NUCLEOTIDE SEQUENCE [GENOMIC DNA]</scope>
    <source>
        <strain>BR60 / Isolate Bloody Run creek</strain>
        <transposon>Tn5271</transposon>
    </source>
</reference>
<dbReference type="EC" id="1.-.-.-"/>
<dbReference type="EMBL" id="U18133">
    <property type="protein sequence ID" value="AAC45718.1"/>
    <property type="molecule type" value="Genomic_DNA"/>
</dbReference>
<dbReference type="SMR" id="Q44258"/>
<dbReference type="BioCyc" id="MetaCyc:MONOMER-14758"/>
<dbReference type="GO" id="GO:0000166">
    <property type="term" value="F:nucleotide binding"/>
    <property type="evidence" value="ECO:0007669"/>
    <property type="project" value="InterPro"/>
</dbReference>
<dbReference type="GO" id="GO:0016491">
    <property type="term" value="F:oxidoreductase activity"/>
    <property type="evidence" value="ECO:0007669"/>
    <property type="project" value="UniProtKB-KW"/>
</dbReference>
<dbReference type="GO" id="GO:0009056">
    <property type="term" value="P:catabolic process"/>
    <property type="evidence" value="ECO:0007669"/>
    <property type="project" value="UniProtKB-KW"/>
</dbReference>
<dbReference type="Gene3D" id="3.30.360.10">
    <property type="entry name" value="Dihydrodipicolinate Reductase, domain 2"/>
    <property type="match status" value="1"/>
</dbReference>
<dbReference type="Gene3D" id="3.40.50.720">
    <property type="entry name" value="NAD(P)-binding Rossmann-like Domain"/>
    <property type="match status" value="1"/>
</dbReference>
<dbReference type="InterPro" id="IPR000683">
    <property type="entry name" value="Gfo/Idh/MocA-like_OxRdtase_N"/>
</dbReference>
<dbReference type="InterPro" id="IPR050463">
    <property type="entry name" value="Gfo/Idh/MocA_oxidrdct_glycsds"/>
</dbReference>
<dbReference type="InterPro" id="IPR055170">
    <property type="entry name" value="GFO_IDH_MocA-like_dom"/>
</dbReference>
<dbReference type="InterPro" id="IPR036291">
    <property type="entry name" value="NAD(P)-bd_dom_sf"/>
</dbReference>
<dbReference type="PANTHER" id="PTHR43818">
    <property type="entry name" value="BCDNA.GH03377"/>
    <property type="match status" value="1"/>
</dbReference>
<dbReference type="PANTHER" id="PTHR43818:SF11">
    <property type="entry name" value="BCDNA.GH03377"/>
    <property type="match status" value="1"/>
</dbReference>
<dbReference type="Pfam" id="PF01408">
    <property type="entry name" value="GFO_IDH_MocA"/>
    <property type="match status" value="1"/>
</dbReference>
<dbReference type="Pfam" id="PF22725">
    <property type="entry name" value="GFO_IDH_MocA_C3"/>
    <property type="match status" value="1"/>
</dbReference>
<dbReference type="SUPFAM" id="SSF55347">
    <property type="entry name" value="Glyceraldehyde-3-phosphate dehydrogenase-like, C-terminal domain"/>
    <property type="match status" value="1"/>
</dbReference>
<dbReference type="SUPFAM" id="SSF51735">
    <property type="entry name" value="NAD(P)-binding Rossmann-fold domains"/>
    <property type="match status" value="1"/>
</dbReference>
<evidence type="ECO:0000305" key="1"/>
<name>CBAC_COMTE</name>
<proteinExistence type="predicted"/>
<feature type="chain" id="PRO_0000089365" description="1-carboxy-3-chloro-3,4-dihydroxycyclo hexa-1,5-diene dehydrogenase">
    <location>
        <begin position="1"/>
        <end position="397"/>
    </location>
</feature>